<gene>
    <name evidence="19 23" type="primary">SRD5A3</name>
    <name type="synonym">SRD5A2L</name>
</gene>
<organism>
    <name type="scientific">Homo sapiens</name>
    <name type="common">Human</name>
    <dbReference type="NCBI Taxonomy" id="9606"/>
    <lineage>
        <taxon>Eukaryota</taxon>
        <taxon>Metazoa</taxon>
        <taxon>Chordata</taxon>
        <taxon>Craniata</taxon>
        <taxon>Vertebrata</taxon>
        <taxon>Euteleostomi</taxon>
        <taxon>Mammalia</taxon>
        <taxon>Eutheria</taxon>
        <taxon>Euarchontoglires</taxon>
        <taxon>Primates</taxon>
        <taxon>Haplorrhini</taxon>
        <taxon>Catarrhini</taxon>
        <taxon>Hominidae</taxon>
        <taxon>Homo</taxon>
    </lineage>
</organism>
<feature type="chain" id="PRO_0000317703" description="Polyprenal reductase">
    <location>
        <begin position="1"/>
        <end position="318"/>
    </location>
</feature>
<feature type="topological domain" description="Cytoplasmic" evidence="1">
    <location>
        <begin position="1"/>
        <end position="11"/>
    </location>
</feature>
<feature type="transmembrane region" description="Helical" evidence="1">
    <location>
        <begin position="12"/>
        <end position="34"/>
    </location>
</feature>
<feature type="topological domain" description="Lumenal" evidence="1">
    <location>
        <begin position="35"/>
        <end position="80"/>
    </location>
</feature>
<feature type="transmembrane region" description="Helical" evidence="1">
    <location>
        <begin position="81"/>
        <end position="101"/>
    </location>
</feature>
<feature type="topological domain" description="Cytoplasmic" evidence="1">
    <location>
        <begin position="102"/>
        <end position="117"/>
    </location>
</feature>
<feature type="transmembrane region" description="Helical" evidence="1">
    <location>
        <begin position="118"/>
        <end position="138"/>
    </location>
</feature>
<feature type="topological domain" description="Lumenal" evidence="1">
    <location>
        <begin position="139"/>
        <end position="157"/>
    </location>
</feature>
<feature type="transmembrane region" description="Helical" evidence="1">
    <location>
        <begin position="158"/>
        <end position="178"/>
    </location>
</feature>
<feature type="topological domain" description="Cytoplasmic" evidence="1">
    <location>
        <begin position="179"/>
        <end position="194"/>
    </location>
</feature>
<feature type="transmembrane region" description="Helical" evidence="1">
    <location>
        <begin position="195"/>
        <end position="215"/>
    </location>
</feature>
<feature type="topological domain" description="Lumenal" evidence="1">
    <location>
        <begin position="216"/>
        <end position="260"/>
    </location>
</feature>
<feature type="transmembrane region" description="Helical" evidence="1">
    <location>
        <begin position="261"/>
        <end position="281"/>
    </location>
</feature>
<feature type="topological domain" description="Cytoplasmic" evidence="1">
    <location>
        <begin position="282"/>
        <end position="318"/>
    </location>
</feature>
<feature type="sequence variant" id="VAR_089715" description="In CDG1Q." evidence="3 5">
    <location>
        <begin position="10"/>
        <end position="318"/>
    </location>
</feature>
<feature type="sequence variant" id="VAR_089716" description="In CDG1Q." evidence="5 7 10 11 12 16">
    <location>
        <begin position="19"/>
        <end position="318"/>
    </location>
</feature>
<feature type="sequence variant" id="VAR_089717" description="In CDG1Q." evidence="3 5 8">
    <location>
        <begin position="107"/>
        <end position="318"/>
    </location>
</feature>
<feature type="sequence variant" id="VAR_089718" description="In CDG1Q." evidence="3 5">
    <location>
        <begin position="142"/>
        <end position="318"/>
    </location>
</feature>
<feature type="sequence variant" id="VAR_089719" description="In CDG1Q; uncertain significance." evidence="17">
    <original>R</original>
    <variation>K</variation>
    <location>
        <position position="143"/>
    </location>
</feature>
<feature type="sequence variant" id="VAR_089720" description="In CDG1Q; uncertain significance; dbSNP:rs772795484." evidence="14">
    <original>E</original>
    <variation>K</variation>
    <location>
        <position position="146"/>
    </location>
</feature>
<feature type="sequence variant" id="VAR_089721" description="In CDG1Q." evidence="3 5">
    <location>
        <begin position="163"/>
        <end position="318"/>
    </location>
</feature>
<feature type="sequence variant" id="VAR_089722" description="In CDG1Q." evidence="10">
    <location>
        <begin position="201"/>
        <end position="318"/>
    </location>
</feature>
<feature type="sequence variant" id="VAR_089723" description="In CDG1Q; uncertain significance; dbSNP:rs769885824." evidence="10">
    <original>P</original>
    <variation>R</variation>
    <location>
        <position position="307"/>
    </location>
</feature>
<feature type="mutagenesis site" description="Loss of function." evidence="2 3">
    <original>H</original>
    <variation>A</variation>
    <location>
        <position position="296"/>
    </location>
</feature>
<comment type="function">
    <text evidence="2 3 9 18">Plays a key role in early steps of protein N-linked glycosylation by being involved in the conversion of polyprenol into dolichol (PubMed:20637498, PubMed:38821050). Acts as a polyprenal reductase that mediates the reduction of polyprenal into dolichal in a NADP-dependent mechanism (PubMed:38821050). Dolichols are required for the synthesis of dolichol-linked monosaccharides and the oligosaccharide precursor used for N-glycosylation (PubMed:20637498, PubMed:38821050). Also able to convert testosterone (T) into 5-alpha-dihydrotestosterone (DHT) (PubMed:17986282, PubMed:26855069).</text>
</comment>
<comment type="catalytic activity">
    <reaction evidence="18">
        <text>a di-trans,poly-cis-dolichal + NADP(+) = a di-trans,poly-cis-polyprenal + NADPH + H(+)</text>
        <dbReference type="Rhea" id="RHEA:80727"/>
        <dbReference type="Rhea" id="RHEA-COMP:19536"/>
        <dbReference type="Rhea" id="RHEA-COMP:19537"/>
        <dbReference type="ChEBI" id="CHEBI:15378"/>
        <dbReference type="ChEBI" id="CHEBI:57783"/>
        <dbReference type="ChEBI" id="CHEBI:58349"/>
        <dbReference type="ChEBI" id="CHEBI:231623"/>
        <dbReference type="ChEBI" id="CHEBI:231637"/>
        <dbReference type="EC" id="1.3.1.94"/>
    </reaction>
    <physiologicalReaction direction="right-to-left" evidence="18">
        <dbReference type="Rhea" id="RHEA:80729"/>
    </physiologicalReaction>
</comment>
<comment type="catalytic activity">
    <reaction evidence="22">
        <text>a 3-oxo-5alpha-steroid + NADP(+) = a 3-oxo-Delta(4)-steroid + NADPH + H(+)</text>
        <dbReference type="Rhea" id="RHEA:54384"/>
        <dbReference type="ChEBI" id="CHEBI:13601"/>
        <dbReference type="ChEBI" id="CHEBI:15378"/>
        <dbReference type="ChEBI" id="CHEBI:47909"/>
        <dbReference type="ChEBI" id="CHEBI:57783"/>
        <dbReference type="ChEBI" id="CHEBI:58349"/>
        <dbReference type="EC" id="1.3.1.22"/>
    </reaction>
    <physiologicalReaction direction="right-to-left" evidence="22">
        <dbReference type="Rhea" id="RHEA:54386"/>
    </physiologicalReaction>
</comment>
<comment type="catalytic activity">
    <reaction evidence="9">
        <text>androst-4-ene-3,17-dione + NADPH + H(+) = 5alpha-androstan-3,17-dione + NADP(+)</text>
        <dbReference type="Rhea" id="RHEA:50816"/>
        <dbReference type="ChEBI" id="CHEBI:15378"/>
        <dbReference type="ChEBI" id="CHEBI:15994"/>
        <dbReference type="ChEBI" id="CHEBI:16422"/>
        <dbReference type="ChEBI" id="CHEBI:57783"/>
        <dbReference type="ChEBI" id="CHEBI:58349"/>
    </reaction>
    <physiologicalReaction direction="right-to-left" evidence="22">
        <dbReference type="Rhea" id="RHEA:50818"/>
    </physiologicalReaction>
</comment>
<comment type="catalytic activity">
    <reaction evidence="9">
        <text>17beta-hydroxy-5alpha-androstan-3-one + NADP(+) = testosterone + NADPH + H(+)</text>
        <dbReference type="Rhea" id="RHEA:50820"/>
        <dbReference type="ChEBI" id="CHEBI:15378"/>
        <dbReference type="ChEBI" id="CHEBI:16330"/>
        <dbReference type="ChEBI" id="CHEBI:17347"/>
        <dbReference type="ChEBI" id="CHEBI:57783"/>
        <dbReference type="ChEBI" id="CHEBI:58349"/>
        <dbReference type="EC" id="1.3.1.22"/>
    </reaction>
    <physiologicalReaction direction="right-to-left" evidence="22">
        <dbReference type="Rhea" id="RHEA:50822"/>
    </physiologicalReaction>
</comment>
<comment type="pathway">
    <text evidence="3 18">Protein modification; protein glycosylation.</text>
</comment>
<comment type="subcellular location">
    <subcellularLocation>
        <location evidence="21">Endoplasmic reticulum membrane</location>
        <topology evidence="1">Multi-pass membrane protein</topology>
    </subcellularLocation>
</comment>
<comment type="tissue specificity">
    <text evidence="2 9">Expressed in preadipocytes (at protein level) (PubMed:26855069). Overexpressed in hormone-refractory prostate cancers (HRPC). Almost no or little expression in normal adult organs.</text>
</comment>
<comment type="disease" evidence="3 5 6 7 8 10 11 12 13 14 15 16 17">
    <disease id="DI-02863">
        <name>Congenital disorder of glycosylation 1Q</name>
        <acronym>CDG1Q</acronym>
        <description>A form of congenital disorder of glycosylation, a multisystem disorder caused by a defect in glycoprotein biosynthesis and characterized by under-glycosylated serum glycoproteins. Congenital disorders of glycosylation result in a wide variety of clinical features, such as defects in the nervous system development, psychomotor retardation, dysmorphic features, hypotonia, coagulation disorders, and immunodeficiency. The broad spectrum of features reflects the critical role of N-glycoproteins during embryonic development, differentiation, and maintenance of cell functions.</description>
        <dbReference type="MIM" id="612379"/>
    </disease>
    <text>The disease is caused by variants affecting the gene represented in this entry.</text>
</comment>
<comment type="disease" evidence="4">
    <disease id="DI-03364">
        <name>Kahrizi syndrome</name>
        <acronym>KHRZ</acronym>
        <description>An autosomal recessive neurodevelopmental disorder characterized by intellectual disability, cataracts, coloboma, kyphosis, and coarse facial features.</description>
        <dbReference type="MIM" id="612713"/>
    </disease>
    <text>The disease is caused by variants affecting the gene represented in this entry.</text>
</comment>
<comment type="similarity">
    <text evidence="20">Belongs to the steroid 5-alpha reductase family. Polyprenal reductase subfamily.</text>
</comment>
<comment type="caution">
    <text evidence="3 18">Was initially characterized as a polyprenol reductase, mediating the conversion of polyprenol into dolichol (PubMed:20637498). However, it was later shown to catalyze an intermediate step in this pathway and reduce polyprenal (PubMed:38821050).</text>
</comment>
<proteinExistence type="evidence at protein level"/>
<sequence>MAPWAEAEHSALNPLRAVWLTLTAAFLLTLLLQLLPPGLLPGCAIFQDLIRYGKTKCGEPSRPAACRAFDVPKRYFSHFYIISVLWNGFLLWCLTQSLFLGAPFPSWLHGLLRILGAAQFQGGELALSAFLVLVFLWLHSLRRLFECLYVSVFSNVMIHVVQYCFGLVYYVLVGLTVLSQVPMDGRNAYITGKNLLMQARWFHILGMMMFIWSSAHQYKCHVILGNLRKNKAGVVIHCNHRIPFGDWFEYVSSPNYLAELMIYVSMAVTFGFHNLTWWLVVTNVFFNQALSAFLSHQFYKSKFVSYPKHRKAFLPFLF</sequence>
<keyword id="KW-0898">Cataract</keyword>
<keyword id="KW-0900">Congenital disorder of glycosylation</keyword>
<keyword id="KW-0225">Disease variant</keyword>
<keyword id="KW-0256">Endoplasmic reticulum</keyword>
<keyword id="KW-0991">Intellectual disability</keyword>
<keyword id="KW-0443">Lipid metabolism</keyword>
<keyword id="KW-0472">Membrane</keyword>
<keyword id="KW-0521">NADP</keyword>
<keyword id="KW-0560">Oxidoreductase</keyword>
<keyword id="KW-1267">Proteomics identification</keyword>
<keyword id="KW-1185">Reference proteome</keyword>
<keyword id="KW-0812">Transmembrane</keyword>
<keyword id="KW-1133">Transmembrane helix</keyword>
<name>SR5A3_HUMAN</name>
<accession>Q9H8P0</accession>
<accession>Q4W5Q6</accession>
<evidence type="ECO:0000255" key="1"/>
<evidence type="ECO:0000269" key="2">
    <source>
    </source>
</evidence>
<evidence type="ECO:0000269" key="3">
    <source>
    </source>
</evidence>
<evidence type="ECO:0000269" key="4">
    <source>
    </source>
</evidence>
<evidence type="ECO:0000269" key="5">
    <source>
    </source>
</evidence>
<evidence type="ECO:0000269" key="6">
    <source>
    </source>
</evidence>
<evidence type="ECO:0000269" key="7">
    <source>
    </source>
</evidence>
<evidence type="ECO:0000269" key="8">
    <source>
    </source>
</evidence>
<evidence type="ECO:0000269" key="9">
    <source>
    </source>
</evidence>
<evidence type="ECO:0000269" key="10">
    <source>
    </source>
</evidence>
<evidence type="ECO:0000269" key="11">
    <source>
    </source>
</evidence>
<evidence type="ECO:0000269" key="12">
    <source>
    </source>
</evidence>
<evidence type="ECO:0000269" key="13">
    <source>
    </source>
</evidence>
<evidence type="ECO:0000269" key="14">
    <source>
    </source>
</evidence>
<evidence type="ECO:0000269" key="15">
    <source>
    </source>
</evidence>
<evidence type="ECO:0000269" key="16">
    <source>
    </source>
</evidence>
<evidence type="ECO:0000269" key="17">
    <source>
    </source>
</evidence>
<evidence type="ECO:0000269" key="18">
    <source>
    </source>
</evidence>
<evidence type="ECO:0000303" key="19">
    <source>
    </source>
</evidence>
<evidence type="ECO:0000305" key="20"/>
<evidence type="ECO:0000305" key="21">
    <source>
    </source>
</evidence>
<evidence type="ECO:0000305" key="22">
    <source>
    </source>
</evidence>
<evidence type="ECO:0000312" key="23">
    <source>
        <dbReference type="HGNC" id="HGNC:25812"/>
    </source>
</evidence>
<protein>
    <recommendedName>
        <fullName evidence="20">Polyprenal reductase</fullName>
        <ecNumber evidence="18">1.3.1.94</ecNumber>
    </recommendedName>
    <alternativeName>
        <fullName>3-oxo-5-alpha-steroid 4-dehydrogenase 3</fullName>
        <ecNumber evidence="9">1.3.1.22</ecNumber>
    </alternativeName>
    <alternativeName>
        <fullName>Steroid 5-alpha-reductase 2-like</fullName>
    </alternativeName>
    <alternativeName>
        <fullName>Steroid 5-alpha-reductase 3</fullName>
        <shortName>S5AR 3</shortName>
        <shortName>SR type 3</shortName>
    </alternativeName>
</protein>
<dbReference type="EC" id="1.3.1.94" evidence="18"/>
<dbReference type="EC" id="1.3.1.22" evidence="9"/>
<dbReference type="EMBL" id="AK023414">
    <property type="protein sequence ID" value="BAB14568.1"/>
    <property type="molecule type" value="mRNA"/>
</dbReference>
<dbReference type="EMBL" id="CR457312">
    <property type="protein sequence ID" value="CAG33593.1"/>
    <property type="molecule type" value="mRNA"/>
</dbReference>
<dbReference type="EMBL" id="AC064824">
    <property type="protein sequence ID" value="AAY40904.1"/>
    <property type="molecule type" value="Genomic_DNA"/>
</dbReference>
<dbReference type="EMBL" id="CH471057">
    <property type="protein sequence ID" value="EAX05465.1"/>
    <property type="molecule type" value="Genomic_DNA"/>
</dbReference>
<dbReference type="EMBL" id="BC002480">
    <property type="protein sequence ID" value="AAH02480.1"/>
    <property type="molecule type" value="mRNA"/>
</dbReference>
<dbReference type="CCDS" id="CCDS3498.1"/>
<dbReference type="RefSeq" id="NP_078868.1">
    <property type="nucleotide sequence ID" value="NM_024592.5"/>
</dbReference>
<dbReference type="SMR" id="Q9H8P0"/>
<dbReference type="BioGRID" id="122772">
    <property type="interactions" value="5"/>
</dbReference>
<dbReference type="FunCoup" id="Q9H8P0">
    <property type="interactions" value="919"/>
</dbReference>
<dbReference type="IntAct" id="Q9H8P0">
    <property type="interactions" value="2"/>
</dbReference>
<dbReference type="STRING" id="9606.ENSP00000264228"/>
<dbReference type="ChEMBL" id="CHEMBL2363075"/>
<dbReference type="DrugBank" id="DB00548">
    <property type="generic name" value="Azelaic acid"/>
</dbReference>
<dbReference type="DrugBank" id="DB01126">
    <property type="generic name" value="Dutasteride"/>
</dbReference>
<dbReference type="DrugBank" id="DB01216">
    <property type="generic name" value="Finasteride"/>
</dbReference>
<dbReference type="DrugBank" id="DB00717">
    <property type="generic name" value="Norethisterone"/>
</dbReference>
<dbReference type="DrugBank" id="DB13943">
    <property type="generic name" value="Testosterone cypionate"/>
</dbReference>
<dbReference type="DrugBank" id="DB13944">
    <property type="generic name" value="Testosterone enanthate"/>
</dbReference>
<dbReference type="DrugBank" id="DB01420">
    <property type="generic name" value="Testosterone propionate"/>
</dbReference>
<dbReference type="DrugBank" id="DB13946">
    <property type="generic name" value="Testosterone undecanoate"/>
</dbReference>
<dbReference type="SwissLipids" id="SLP:000001637"/>
<dbReference type="iPTMnet" id="Q9H8P0"/>
<dbReference type="PhosphoSitePlus" id="Q9H8P0"/>
<dbReference type="SwissPalm" id="Q9H8P0"/>
<dbReference type="BioMuta" id="SRD5A3"/>
<dbReference type="DMDM" id="74733864"/>
<dbReference type="jPOST" id="Q9H8P0"/>
<dbReference type="MassIVE" id="Q9H8P0"/>
<dbReference type="PaxDb" id="9606-ENSP00000264228"/>
<dbReference type="PeptideAtlas" id="Q9H8P0"/>
<dbReference type="ProteomicsDB" id="81231"/>
<dbReference type="Antibodypedia" id="12328">
    <property type="antibodies" value="80 antibodies from 18 providers"/>
</dbReference>
<dbReference type="DNASU" id="79644"/>
<dbReference type="Ensembl" id="ENST00000264228.9">
    <property type="protein sequence ID" value="ENSP00000264228.4"/>
    <property type="gene ID" value="ENSG00000128039.13"/>
</dbReference>
<dbReference type="GeneID" id="79644"/>
<dbReference type="KEGG" id="hsa:79644"/>
<dbReference type="MANE-Select" id="ENST00000264228.9">
    <property type="protein sequence ID" value="ENSP00000264228.4"/>
    <property type="RefSeq nucleotide sequence ID" value="NM_024592.5"/>
    <property type="RefSeq protein sequence ID" value="NP_078868.1"/>
</dbReference>
<dbReference type="UCSC" id="uc003hau.4">
    <property type="organism name" value="human"/>
</dbReference>
<dbReference type="AGR" id="HGNC:25812"/>
<dbReference type="CTD" id="79644"/>
<dbReference type="DisGeNET" id="79644"/>
<dbReference type="GeneCards" id="SRD5A3"/>
<dbReference type="GeneReviews" id="SRD5A3"/>
<dbReference type="HGNC" id="HGNC:25812">
    <property type="gene designation" value="SRD5A3"/>
</dbReference>
<dbReference type="HPA" id="ENSG00000128039">
    <property type="expression patterns" value="Low tissue specificity"/>
</dbReference>
<dbReference type="MalaCards" id="SRD5A3"/>
<dbReference type="MIM" id="611715">
    <property type="type" value="gene"/>
</dbReference>
<dbReference type="MIM" id="612379">
    <property type="type" value="phenotype"/>
</dbReference>
<dbReference type="MIM" id="612713">
    <property type="type" value="phenotype"/>
</dbReference>
<dbReference type="neXtProt" id="NX_Q9H8P0"/>
<dbReference type="OpenTargets" id="ENSG00000128039"/>
<dbReference type="Orphanet" id="324737">
    <property type="disease" value="SRD5A3-CDG"/>
</dbReference>
<dbReference type="PharmGKB" id="PA162404779"/>
<dbReference type="VEuPathDB" id="HostDB:ENSG00000128039"/>
<dbReference type="eggNOG" id="KOG1640">
    <property type="taxonomic scope" value="Eukaryota"/>
</dbReference>
<dbReference type="GeneTree" id="ENSGT00500000044920"/>
<dbReference type="HOGENOM" id="CLU_044409_2_1_1"/>
<dbReference type="InParanoid" id="Q9H8P0"/>
<dbReference type="OMA" id="RFYETNF"/>
<dbReference type="OrthoDB" id="541710at2759"/>
<dbReference type="PAN-GO" id="Q9H8P0">
    <property type="GO annotations" value="5 GO annotations based on evolutionary models"/>
</dbReference>
<dbReference type="PhylomeDB" id="Q9H8P0"/>
<dbReference type="TreeFam" id="TF315011"/>
<dbReference type="BioCyc" id="MetaCyc:HS13249-MONOMER"/>
<dbReference type="BRENDA" id="1.3.1.22">
    <property type="organism ID" value="2681"/>
</dbReference>
<dbReference type="BRENDA" id="1.3.1.94">
    <property type="organism ID" value="2681"/>
</dbReference>
<dbReference type="BRENDA" id="1.3.1.B13">
    <property type="organism ID" value="2681"/>
</dbReference>
<dbReference type="PathwayCommons" id="Q9H8P0"/>
<dbReference type="Reactome" id="R-HSA-193048">
    <property type="pathway name" value="Androgen biosynthesis"/>
</dbReference>
<dbReference type="Reactome" id="R-HSA-446199">
    <property type="pathway name" value="Synthesis of Dolichyl-phosphate"/>
</dbReference>
<dbReference type="Reactome" id="R-HSA-4755579">
    <property type="pathway name" value="Defective SRD5A3 causes SRD5A3-CDG, KHRZ"/>
</dbReference>
<dbReference type="SignaLink" id="Q9H8P0"/>
<dbReference type="UniPathway" id="UPA00378"/>
<dbReference type="BioGRID-ORCS" id="79644">
    <property type="hits" value="73 hits in 1154 CRISPR screens"/>
</dbReference>
<dbReference type="ChiTaRS" id="SRD5A3">
    <property type="organism name" value="human"/>
</dbReference>
<dbReference type="GeneWiki" id="SRD5A3"/>
<dbReference type="GenomeRNAi" id="79644"/>
<dbReference type="Pharos" id="Q9H8P0">
    <property type="development level" value="Tbio"/>
</dbReference>
<dbReference type="PRO" id="PR:Q9H8P0"/>
<dbReference type="Proteomes" id="UP000005640">
    <property type="component" value="Chromosome 4"/>
</dbReference>
<dbReference type="RNAct" id="Q9H8P0">
    <property type="molecule type" value="protein"/>
</dbReference>
<dbReference type="Bgee" id="ENSG00000128039">
    <property type="expression patterns" value="Expressed in palpebral conjunctiva and 164 other cell types or tissues"/>
</dbReference>
<dbReference type="ExpressionAtlas" id="Q9H8P0">
    <property type="expression patterns" value="baseline and differential"/>
</dbReference>
<dbReference type="GO" id="GO:0005783">
    <property type="term" value="C:endoplasmic reticulum"/>
    <property type="evidence" value="ECO:0000314"/>
    <property type="project" value="UniProtKB"/>
</dbReference>
<dbReference type="GO" id="GO:0005789">
    <property type="term" value="C:endoplasmic reticulum membrane"/>
    <property type="evidence" value="ECO:0000314"/>
    <property type="project" value="UniProt"/>
</dbReference>
<dbReference type="GO" id="GO:0047751">
    <property type="term" value="F:3-oxo-5-alpha-steroid 4-dehydrogenase (NADP+) activity"/>
    <property type="evidence" value="ECO:0000314"/>
    <property type="project" value="UniProtKB"/>
</dbReference>
<dbReference type="GO" id="GO:0003865">
    <property type="term" value="F:3-oxo-5-alpha-steroid 4-dehydrogenase activity"/>
    <property type="evidence" value="ECO:0000304"/>
    <property type="project" value="Reactome"/>
</dbReference>
<dbReference type="GO" id="GO:0016628">
    <property type="term" value="F:oxidoreductase activity, acting on the CH-CH group of donors, NAD or NADP as acceptor"/>
    <property type="evidence" value="ECO:0000314"/>
    <property type="project" value="UniProtKB"/>
</dbReference>
<dbReference type="GO" id="GO:0160198">
    <property type="term" value="F:polyprenal reductase activity"/>
    <property type="evidence" value="ECO:0000314"/>
    <property type="project" value="UniProtKB"/>
</dbReference>
<dbReference type="GO" id="GO:0102389">
    <property type="term" value="F:polyprenol reductase activity"/>
    <property type="evidence" value="ECO:0000318"/>
    <property type="project" value="GO_Central"/>
</dbReference>
<dbReference type="GO" id="GO:0006702">
    <property type="term" value="P:androgen biosynthetic process"/>
    <property type="evidence" value="ECO:0000304"/>
    <property type="project" value="Reactome"/>
</dbReference>
<dbReference type="GO" id="GO:0019408">
    <property type="term" value="P:dolichol biosynthetic process"/>
    <property type="evidence" value="ECO:0000314"/>
    <property type="project" value="UniProtKB"/>
</dbReference>
<dbReference type="GO" id="GO:0019348">
    <property type="term" value="P:dolichol metabolic process"/>
    <property type="evidence" value="ECO:0000314"/>
    <property type="project" value="UniProtKB"/>
</dbReference>
<dbReference type="GO" id="GO:0006488">
    <property type="term" value="P:dolichol-linked oligosaccharide biosynthetic process"/>
    <property type="evidence" value="ECO:0000315"/>
    <property type="project" value="UniProtKB"/>
</dbReference>
<dbReference type="GO" id="GO:0006489">
    <property type="term" value="P:dolichyl diphosphate biosynthetic process"/>
    <property type="evidence" value="ECO:0000304"/>
    <property type="project" value="Reactome"/>
</dbReference>
<dbReference type="GO" id="GO:0016095">
    <property type="term" value="P:polyprenol catabolic process"/>
    <property type="evidence" value="ECO:0000314"/>
    <property type="project" value="UniProtKB"/>
</dbReference>
<dbReference type="FunFam" id="1.20.120.1630:FF:000021">
    <property type="entry name" value="Polyprenol reductase 1"/>
    <property type="match status" value="1"/>
</dbReference>
<dbReference type="Gene3D" id="1.20.120.1630">
    <property type="match status" value="1"/>
</dbReference>
<dbReference type="InterPro" id="IPR001104">
    <property type="entry name" value="3-oxo-5_a-steroid_4-DH_C"/>
</dbReference>
<dbReference type="InterPro" id="IPR039698">
    <property type="entry name" value="Dfg10/SRD5A3"/>
</dbReference>
<dbReference type="PANTHER" id="PTHR14624">
    <property type="entry name" value="DFG10 PROTEIN"/>
    <property type="match status" value="1"/>
</dbReference>
<dbReference type="PANTHER" id="PTHR14624:SF0">
    <property type="entry name" value="POLYPRENOL REDUCTASE"/>
    <property type="match status" value="1"/>
</dbReference>
<dbReference type="Pfam" id="PF02544">
    <property type="entry name" value="Steroid_dh"/>
    <property type="match status" value="1"/>
</dbReference>
<dbReference type="PROSITE" id="PS50244">
    <property type="entry name" value="S5A_REDUCTASE"/>
    <property type="match status" value="1"/>
</dbReference>
<reference key="1">
    <citation type="journal article" date="2004" name="Nat. Genet.">
        <title>Complete sequencing and characterization of 21,243 full-length human cDNAs.</title>
        <authorList>
            <person name="Ota T."/>
            <person name="Suzuki Y."/>
            <person name="Nishikawa T."/>
            <person name="Otsuki T."/>
            <person name="Sugiyama T."/>
            <person name="Irie R."/>
            <person name="Wakamatsu A."/>
            <person name="Hayashi K."/>
            <person name="Sato H."/>
            <person name="Nagai K."/>
            <person name="Kimura K."/>
            <person name="Makita H."/>
            <person name="Sekine M."/>
            <person name="Obayashi M."/>
            <person name="Nishi T."/>
            <person name="Shibahara T."/>
            <person name="Tanaka T."/>
            <person name="Ishii S."/>
            <person name="Yamamoto J."/>
            <person name="Saito K."/>
            <person name="Kawai Y."/>
            <person name="Isono Y."/>
            <person name="Nakamura Y."/>
            <person name="Nagahari K."/>
            <person name="Murakami K."/>
            <person name="Yasuda T."/>
            <person name="Iwayanagi T."/>
            <person name="Wagatsuma M."/>
            <person name="Shiratori A."/>
            <person name="Sudo H."/>
            <person name="Hosoiri T."/>
            <person name="Kaku Y."/>
            <person name="Kodaira H."/>
            <person name="Kondo H."/>
            <person name="Sugawara M."/>
            <person name="Takahashi M."/>
            <person name="Kanda K."/>
            <person name="Yokoi T."/>
            <person name="Furuya T."/>
            <person name="Kikkawa E."/>
            <person name="Omura Y."/>
            <person name="Abe K."/>
            <person name="Kamihara K."/>
            <person name="Katsuta N."/>
            <person name="Sato K."/>
            <person name="Tanikawa M."/>
            <person name="Yamazaki M."/>
            <person name="Ninomiya K."/>
            <person name="Ishibashi T."/>
            <person name="Yamashita H."/>
            <person name="Murakawa K."/>
            <person name="Fujimori K."/>
            <person name="Tanai H."/>
            <person name="Kimata M."/>
            <person name="Watanabe M."/>
            <person name="Hiraoka S."/>
            <person name="Chiba Y."/>
            <person name="Ishida S."/>
            <person name="Ono Y."/>
            <person name="Takiguchi S."/>
            <person name="Watanabe S."/>
            <person name="Yosida M."/>
            <person name="Hotuta T."/>
            <person name="Kusano J."/>
            <person name="Kanehori K."/>
            <person name="Takahashi-Fujii A."/>
            <person name="Hara H."/>
            <person name="Tanase T.-O."/>
            <person name="Nomura Y."/>
            <person name="Togiya S."/>
            <person name="Komai F."/>
            <person name="Hara R."/>
            <person name="Takeuchi K."/>
            <person name="Arita M."/>
            <person name="Imose N."/>
            <person name="Musashino K."/>
            <person name="Yuuki H."/>
            <person name="Oshima A."/>
            <person name="Sasaki N."/>
            <person name="Aotsuka S."/>
            <person name="Yoshikawa Y."/>
            <person name="Matsunawa H."/>
            <person name="Ichihara T."/>
            <person name="Shiohata N."/>
            <person name="Sano S."/>
            <person name="Moriya S."/>
            <person name="Momiyama H."/>
            <person name="Satoh N."/>
            <person name="Takami S."/>
            <person name="Terashima Y."/>
            <person name="Suzuki O."/>
            <person name="Nakagawa S."/>
            <person name="Senoh A."/>
            <person name="Mizoguchi H."/>
            <person name="Goto Y."/>
            <person name="Shimizu F."/>
            <person name="Wakebe H."/>
            <person name="Hishigaki H."/>
            <person name="Watanabe T."/>
            <person name="Sugiyama A."/>
            <person name="Takemoto M."/>
            <person name="Kawakami B."/>
            <person name="Yamazaki M."/>
            <person name="Watanabe K."/>
            <person name="Kumagai A."/>
            <person name="Itakura S."/>
            <person name="Fukuzumi Y."/>
            <person name="Fujimori Y."/>
            <person name="Komiyama M."/>
            <person name="Tashiro H."/>
            <person name="Tanigami A."/>
            <person name="Fujiwara T."/>
            <person name="Ono T."/>
            <person name="Yamada K."/>
            <person name="Fujii Y."/>
            <person name="Ozaki K."/>
            <person name="Hirao M."/>
            <person name="Ohmori Y."/>
            <person name="Kawabata A."/>
            <person name="Hikiji T."/>
            <person name="Kobatake N."/>
            <person name="Inagaki H."/>
            <person name="Ikema Y."/>
            <person name="Okamoto S."/>
            <person name="Okitani R."/>
            <person name="Kawakami T."/>
            <person name="Noguchi S."/>
            <person name="Itoh T."/>
            <person name="Shigeta K."/>
            <person name="Senba T."/>
            <person name="Matsumura K."/>
            <person name="Nakajima Y."/>
            <person name="Mizuno T."/>
            <person name="Morinaga M."/>
            <person name="Sasaki M."/>
            <person name="Togashi T."/>
            <person name="Oyama M."/>
            <person name="Hata H."/>
            <person name="Watanabe M."/>
            <person name="Komatsu T."/>
            <person name="Mizushima-Sugano J."/>
            <person name="Satoh T."/>
            <person name="Shirai Y."/>
            <person name="Takahashi Y."/>
            <person name="Nakagawa K."/>
            <person name="Okumura K."/>
            <person name="Nagase T."/>
            <person name="Nomura N."/>
            <person name="Kikuchi H."/>
            <person name="Masuho Y."/>
            <person name="Yamashita R."/>
            <person name="Nakai K."/>
            <person name="Yada T."/>
            <person name="Nakamura Y."/>
            <person name="Ohara O."/>
            <person name="Isogai T."/>
            <person name="Sugano S."/>
        </authorList>
    </citation>
    <scope>NUCLEOTIDE SEQUENCE [LARGE SCALE MRNA]</scope>
    <source>
        <tissue>Ovary</tissue>
    </source>
</reference>
<reference key="2">
    <citation type="submission" date="2004-06" db="EMBL/GenBank/DDBJ databases">
        <title>Cloning of human full open reading frames in Gateway(TM) system entry vector (pDONR201).</title>
        <authorList>
            <person name="Ebert L."/>
            <person name="Schick M."/>
            <person name="Neubert P."/>
            <person name="Schatten R."/>
            <person name="Henze S."/>
            <person name="Korn B."/>
        </authorList>
    </citation>
    <scope>NUCLEOTIDE SEQUENCE [LARGE SCALE MRNA]</scope>
</reference>
<reference key="3">
    <citation type="journal article" date="2005" name="Nature">
        <title>Generation and annotation of the DNA sequences of human chromosomes 2 and 4.</title>
        <authorList>
            <person name="Hillier L.W."/>
            <person name="Graves T.A."/>
            <person name="Fulton R.S."/>
            <person name="Fulton L.A."/>
            <person name="Pepin K.H."/>
            <person name="Minx P."/>
            <person name="Wagner-McPherson C."/>
            <person name="Layman D."/>
            <person name="Wylie K."/>
            <person name="Sekhon M."/>
            <person name="Becker M.C."/>
            <person name="Fewell G.A."/>
            <person name="Delehaunty K.D."/>
            <person name="Miner T.L."/>
            <person name="Nash W.E."/>
            <person name="Kremitzki C."/>
            <person name="Oddy L."/>
            <person name="Du H."/>
            <person name="Sun H."/>
            <person name="Bradshaw-Cordum H."/>
            <person name="Ali J."/>
            <person name="Carter J."/>
            <person name="Cordes M."/>
            <person name="Harris A."/>
            <person name="Isak A."/>
            <person name="van Brunt A."/>
            <person name="Nguyen C."/>
            <person name="Du F."/>
            <person name="Courtney L."/>
            <person name="Kalicki J."/>
            <person name="Ozersky P."/>
            <person name="Abbott S."/>
            <person name="Armstrong J."/>
            <person name="Belter E.A."/>
            <person name="Caruso L."/>
            <person name="Cedroni M."/>
            <person name="Cotton M."/>
            <person name="Davidson T."/>
            <person name="Desai A."/>
            <person name="Elliott G."/>
            <person name="Erb T."/>
            <person name="Fronick C."/>
            <person name="Gaige T."/>
            <person name="Haakenson W."/>
            <person name="Haglund K."/>
            <person name="Holmes A."/>
            <person name="Harkins R."/>
            <person name="Kim K."/>
            <person name="Kruchowski S.S."/>
            <person name="Strong C.M."/>
            <person name="Grewal N."/>
            <person name="Goyea E."/>
            <person name="Hou S."/>
            <person name="Levy A."/>
            <person name="Martinka S."/>
            <person name="Mead K."/>
            <person name="McLellan M.D."/>
            <person name="Meyer R."/>
            <person name="Randall-Maher J."/>
            <person name="Tomlinson C."/>
            <person name="Dauphin-Kohlberg S."/>
            <person name="Kozlowicz-Reilly A."/>
            <person name="Shah N."/>
            <person name="Swearengen-Shahid S."/>
            <person name="Snider J."/>
            <person name="Strong J.T."/>
            <person name="Thompson J."/>
            <person name="Yoakum M."/>
            <person name="Leonard S."/>
            <person name="Pearman C."/>
            <person name="Trani L."/>
            <person name="Radionenko M."/>
            <person name="Waligorski J.E."/>
            <person name="Wang C."/>
            <person name="Rock S.M."/>
            <person name="Tin-Wollam A.-M."/>
            <person name="Maupin R."/>
            <person name="Latreille P."/>
            <person name="Wendl M.C."/>
            <person name="Yang S.-P."/>
            <person name="Pohl C."/>
            <person name="Wallis J.W."/>
            <person name="Spieth J."/>
            <person name="Bieri T.A."/>
            <person name="Berkowicz N."/>
            <person name="Nelson J.O."/>
            <person name="Osborne J."/>
            <person name="Ding L."/>
            <person name="Meyer R."/>
            <person name="Sabo A."/>
            <person name="Shotland Y."/>
            <person name="Sinha P."/>
            <person name="Wohldmann P.E."/>
            <person name="Cook L.L."/>
            <person name="Hickenbotham M.T."/>
            <person name="Eldred J."/>
            <person name="Williams D."/>
            <person name="Jones T.A."/>
            <person name="She X."/>
            <person name="Ciccarelli F.D."/>
            <person name="Izaurralde E."/>
            <person name="Taylor J."/>
            <person name="Schmutz J."/>
            <person name="Myers R.M."/>
            <person name="Cox D.R."/>
            <person name="Huang X."/>
            <person name="McPherson J.D."/>
            <person name="Mardis E.R."/>
            <person name="Clifton S.W."/>
            <person name="Warren W.C."/>
            <person name="Chinwalla A.T."/>
            <person name="Eddy S.R."/>
            <person name="Marra M.A."/>
            <person name="Ovcharenko I."/>
            <person name="Furey T.S."/>
            <person name="Miller W."/>
            <person name="Eichler E.E."/>
            <person name="Bork P."/>
            <person name="Suyama M."/>
            <person name="Torrents D."/>
            <person name="Waterston R.H."/>
            <person name="Wilson R.K."/>
        </authorList>
    </citation>
    <scope>NUCLEOTIDE SEQUENCE [LARGE SCALE GENOMIC DNA]</scope>
</reference>
<reference key="4">
    <citation type="submission" date="2005-07" db="EMBL/GenBank/DDBJ databases">
        <authorList>
            <person name="Mural R.J."/>
            <person name="Istrail S."/>
            <person name="Sutton G.G."/>
            <person name="Florea L."/>
            <person name="Halpern A.L."/>
            <person name="Mobarry C.M."/>
            <person name="Lippert R."/>
            <person name="Walenz B."/>
            <person name="Shatkay H."/>
            <person name="Dew I."/>
            <person name="Miller J.R."/>
            <person name="Flanigan M.J."/>
            <person name="Edwards N.J."/>
            <person name="Bolanos R."/>
            <person name="Fasulo D."/>
            <person name="Halldorsson B.V."/>
            <person name="Hannenhalli S."/>
            <person name="Turner R."/>
            <person name="Yooseph S."/>
            <person name="Lu F."/>
            <person name="Nusskern D.R."/>
            <person name="Shue B.C."/>
            <person name="Zheng X.H."/>
            <person name="Zhong F."/>
            <person name="Delcher A.L."/>
            <person name="Huson D.H."/>
            <person name="Kravitz S.A."/>
            <person name="Mouchard L."/>
            <person name="Reinert K."/>
            <person name="Remington K.A."/>
            <person name="Clark A.G."/>
            <person name="Waterman M.S."/>
            <person name="Eichler E.E."/>
            <person name="Adams M.D."/>
            <person name="Hunkapiller M.W."/>
            <person name="Myers E.W."/>
            <person name="Venter J.C."/>
        </authorList>
    </citation>
    <scope>NUCLEOTIDE SEQUENCE [LARGE SCALE GENOMIC DNA]</scope>
</reference>
<reference key="5">
    <citation type="journal article" date="2004" name="Genome Res.">
        <title>The status, quality, and expansion of the NIH full-length cDNA project: the Mammalian Gene Collection (MGC).</title>
        <authorList>
            <consortium name="The MGC Project Team"/>
        </authorList>
    </citation>
    <scope>NUCLEOTIDE SEQUENCE [LARGE SCALE MRNA]</scope>
    <source>
        <tissue>Eye</tissue>
    </source>
</reference>
<reference key="6">
    <citation type="journal article" date="2008" name="Cancer Sci.">
        <title>Novel 5 alpha-steroid reductase (SRD5A3, type-3) is overexpressed in hormone-refractory prostate cancer.</title>
        <authorList>
            <person name="Uemura M."/>
            <person name="Tamura K."/>
            <person name="Chung S."/>
            <person name="Honma S."/>
            <person name="Okuyama A."/>
            <person name="Nakamura Y."/>
            <person name="Nakagawa H."/>
        </authorList>
    </citation>
    <scope>FUNCTION</scope>
    <scope>CATALYTIC ACTIVITY</scope>
    <scope>TISSUE SPECIFICITY</scope>
    <scope>MUTAGENESIS OF HIS-296</scope>
</reference>
<reference key="7">
    <citation type="journal article" date="2010" name="Brain">
        <title>A novel cerebello-ocular syndrome with abnormal glycosylation due to abnormalities in dolichol metabolism.</title>
        <authorList>
            <person name="Morava E."/>
            <person name="Wevers R.A."/>
            <person name="Cantagrel V."/>
            <person name="Hoefsloot L.H."/>
            <person name="Al-Gazali L."/>
            <person name="Schoots J."/>
            <person name="van Rooij A."/>
            <person name="Huijben K."/>
            <person name="van Ravenswaaij-Arts C.M."/>
            <person name="Jongmans M.C."/>
            <person name="Sykut-Cegielska J."/>
            <person name="Hoffmann G.F."/>
            <person name="Bluemel P."/>
            <person name="Adamowicz M."/>
            <person name="van Reeuwijk J."/>
            <person name="Ng B.G."/>
            <person name="Bergman J.E."/>
            <person name="van Bokhoven H."/>
            <person name="Koerner C."/>
            <person name="Babovic-Vuksanovic D."/>
            <person name="Willemsen M.A."/>
            <person name="Gleeson J.G."/>
            <person name="Lehle L."/>
            <person name="de Brouwer A.P."/>
            <person name="Lefeber D.J."/>
        </authorList>
    </citation>
    <scope>VARIANTS CDG1Q 10-SER--PHE-318 DEL; 19-TRP--PHE-318 DEL; 107-TRP--PHE-318 DEL; 142-ARG--PHE-318 DEL AND 163-TYR--PHE-318 DEL</scope>
</reference>
<reference key="8">
    <citation type="journal article" date="2010" name="Cell">
        <title>SRD5A3 is required for converting polyprenol to dolichol and is mutated in a congenital glycosylation disorder.</title>
        <authorList>
            <person name="Cantagrel V."/>
            <person name="Lefeber D.J."/>
            <person name="Ng B.G."/>
            <person name="Guan Z."/>
            <person name="Silhavy J.L."/>
            <person name="Bielas S.L."/>
            <person name="Lehle L."/>
            <person name="Hombauer H."/>
            <person name="Adamowicz M."/>
            <person name="Swiezewska E."/>
            <person name="De Brouwer A.P."/>
            <person name="Blumel P."/>
            <person name="Sykut-Cegielska J."/>
            <person name="Houliston S."/>
            <person name="Swistun D."/>
            <person name="Ali B.R."/>
            <person name="Dobyns W.B."/>
            <person name="Babovic-Vuksanovic D."/>
            <person name="van Bokhoven H."/>
            <person name="Wevers R.A."/>
            <person name="Raetz C.R."/>
            <person name="Freeze H.H."/>
            <person name="Morava E."/>
            <person name="Al-Gazali L."/>
            <person name="Gleeson J.G."/>
        </authorList>
    </citation>
    <scope>FUNCTION</scope>
    <scope>PATHWAY</scope>
    <scope>SUBCELLULAR LOCATION</scope>
    <scope>INVOLVEMENT IN CDG1Q</scope>
    <scope>MUTAGENESIS OF HIS-296</scope>
    <scope>VARIANTS CDG1Q 10-SER--PHE-318 DEL; 107-TRP--PHE-318 DEL; 142-ARG--PHE-318 DEL AND 163-TYR--PHE-318 DEL</scope>
</reference>
<reference key="9">
    <citation type="journal article" date="2011" name="Eur. J. Hum. Genet.">
        <title>Next generation sequencing in a family with autosomal recessive Kahrizi syndrome (OMIM 612713) reveals a homozygous frameshift mutation in SRD5A3.</title>
        <authorList>
            <person name="Kahrizi K."/>
            <person name="Hu C.H."/>
            <person name="Garshasbi M."/>
            <person name="Abedini S.S."/>
            <person name="Ghadami S."/>
            <person name="Kariminejad R."/>
            <person name="Ullmann R."/>
            <person name="Chen W."/>
            <person name="Ropers H.H."/>
            <person name="Kuss A.W."/>
            <person name="Najmabadi H."/>
            <person name="Tzschach A."/>
        </authorList>
    </citation>
    <scope>INVOLVEMENT IN KHRZ</scope>
</reference>
<reference key="10">
    <citation type="journal article" date="2012" name="Eur. J. Paediatr. Neurol.">
        <title>SRD5A3-CDG: A patient with a novel mutation.</title>
        <authorList>
            <person name="Kasapkara C.S."/>
            <person name="Tumer L."/>
            <person name="Ezgu F.S."/>
            <person name="Hasanoglu A."/>
            <person name="Race V."/>
            <person name="Matthijs G."/>
            <person name="Jaeken J."/>
        </authorList>
    </citation>
    <scope>INVOLVEMENT IN CDG1Q</scope>
</reference>
<reference key="11">
    <citation type="journal article" date="2016" name="J. Steroid Biochem. Mol. Biol.">
        <title>Characterization of 5alpha-reductase activity and isoenzymes in human abdominal adipose tissues.</title>
        <authorList>
            <person name="Fouad Mansour M."/>
            <person name="Pelletier M."/>
            <person name="Tchernof A."/>
        </authorList>
    </citation>
    <scope>FUNCTION</scope>
    <scope>CATALYTIC ACTIVITY</scope>
    <scope>TISSUE SPECIFICITY</scope>
</reference>
<reference key="12">
    <citation type="journal article" date="2014" name="BMC Med. Genet.">
        <title>Adult phenotype and further phenotypic variability in SRD5A3-CDG.</title>
        <authorList>
            <person name="Kara B."/>
            <person name="Ayhan O."/>
            <person name="Goekcay G."/>
            <person name="Basbogaoglu N."/>
            <person name="Tolun A."/>
        </authorList>
    </citation>
    <scope>VARIANT CDG1Q 19-TRP--PHE-318 DEL</scope>
</reference>
<reference key="13">
    <citation type="journal article" date="2016" name="Am. J. Med. Genet. A">
        <title>SRD5A3-CDG: Expanding the phenotype of a congenital disorder of glycosylation with emphasis on adult onset features.</title>
        <authorList>
            <person name="Wheeler P.G."/>
            <person name="Ng B.G."/>
            <person name="Sanford L."/>
            <person name="Sutton V.R."/>
            <person name="Bartholomew D.W."/>
            <person name="Pastore M.T."/>
            <person name="Bamshad M.J."/>
            <person name="Kircher M."/>
            <person name="Buckingham K.J."/>
            <person name="Nickerson D.A."/>
            <person name="Shendure J."/>
            <person name="Freeze H.H."/>
        </authorList>
    </citation>
    <scope>VARIANTS CDG1Q 19-TRP--PHE-318 DEL; 201-TRP--PHE-318 DEL AND ARG-307</scope>
</reference>
<reference key="14">
    <citation type="journal article" date="2016" name="JIMD Rep.">
        <title>Phenotypic expansion of congenital disorder of glycosylation due to SRD5A3 null mutation.</title>
        <authorList>
            <person name="Tuysuz B."/>
            <person name="Pehlivan D."/>
            <person name="Oezkoek A."/>
            <person name="Jhangiani S."/>
            <person name="Yalcinkaya C."/>
            <person name="Zeybek C.A."/>
            <person name="Muzny D.M."/>
            <person name="Lupski J.R."/>
            <person name="Gibbs R."/>
            <person name="Jaeken J."/>
        </authorList>
    </citation>
    <scope>VARIANT CDG1Q 107-TRP--PHE-318 DEL</scope>
</reference>
<reference key="15">
    <citation type="journal article" date="2017" name="JAMA Ophthalmol.">
        <title>Association of steroid 5alpha-reductase type 3 congenital disorder of glycosylation with early-onset retinal dystrophy.</title>
        <authorList>
            <consortium name="UK Inherited Retinal Disease Consortium and the 100,000 Genomes Project"/>
            <person name="Taylor R.L."/>
            <person name="Arno G."/>
            <person name="Poulter J.A."/>
            <person name="Khan K.N."/>
            <person name="Morarji J."/>
            <person name="Hull S."/>
            <person name="Pontikos N."/>
            <person name="Rueda Martin A."/>
            <person name="Smith K.R."/>
            <person name="Ali M."/>
            <person name="Toomes C."/>
            <person name="McKibbin M."/>
            <person name="Clayton-Smith J."/>
            <person name="Grunewald S."/>
            <person name="Michaelides M."/>
            <person name="Moore A.T."/>
            <person name="Hardcastle A.J."/>
            <person name="Inglehearn C.F."/>
            <person name="Webster A.R."/>
            <person name="Black G.C."/>
        </authorList>
    </citation>
    <scope>VARIANT CDG1Q 19-TRP--PHE-318 DEL</scope>
</reference>
<reference key="16">
    <citation type="journal article" date="2018" name="Indian J. Med. Res.">
        <title>Identification of a case of SRD5A3-congenital disorder of glycosylation (CDG1Q) by exome sequencing.</title>
        <authorList>
            <person name="Gupta N."/>
            <person name="Verma G."/>
            <person name="Kabra M."/>
            <person name="Bijarnia-Mahay S."/>
            <person name="Ganapathy A."/>
        </authorList>
    </citation>
    <scope>VARIANT CDG1Q 19-TRP--PHE-318 DEL</scope>
</reference>
<reference key="17">
    <citation type="journal article" date="2018" name="Ophthalmic Genet.">
        <title>Early-onset retinal dystrophy and chronic dermatitis in a girl with an undiagnosed congenital disorder of glycosylation (SRD5A3-CDG).</title>
        <authorList>
            <person name="Khan A.O."/>
        </authorList>
    </citation>
    <scope>INVOLVEMENT IN CDG1Q</scope>
</reference>
<reference key="18">
    <citation type="journal article" date="2019" name="Folia Biol. (Praha)">
        <title>Review of SRD5A3 Disease-Causing Sequence Variants and Ocular Findings in Steroid 5alpha-Reductase Type 3 Congenital Disorder of Glycosylation, and a Detailed New Case.</title>
        <authorList>
            <person name="Kousal B."/>
            <person name="Honzik T."/>
            <person name="Hansikova H."/>
            <person name="Ondruskova N."/>
            <person name="Cechova A."/>
            <person name="Tesarova M."/>
            <person name="Stranecky V."/>
            <person name="Meliska M."/>
            <person name="Michaelides M."/>
            <person name="Liskova P."/>
        </authorList>
    </citation>
    <scope>VARIANT CDG1Q LYS-146</scope>
</reference>
<reference key="19">
    <citation type="journal article" date="2022" name="Clin. Case Rep.">
        <title>A rare case of SRD5A3-CDG in a patient with ataxia and telangiectasia: A case report.</title>
        <authorList>
            <person name="Nabavizadeh S.H."/>
            <person name="Noeiaghdam R."/>
            <person name="Johari L."/>
            <person name="Hosseini S.A."/>
            <person name="Esmaeilzadeh H."/>
            <person name="Alyasin S.S."/>
        </authorList>
    </citation>
    <scope>VARIANT CDG1Q 19-TRP--PHE-318 DEL</scope>
</reference>
<reference key="20">
    <citation type="journal article" date="2022" name="Eur. J. Med. Genet.">
        <title>SRD5A3-CDG: Twins with an intragenic tandem duplication.</title>
        <authorList>
            <person name="Rieger M."/>
            <person name="Tuerk M."/>
            <person name="Kraus C."/>
            <person name="Uebe S."/>
            <person name="Ekici A.B."/>
            <person name="Krumbiegel M."/>
            <person name="Huchzermeyer C."/>
            <person name="Reis A."/>
            <person name="Thiel C."/>
        </authorList>
    </citation>
    <scope>INVOLVEMENT IN CDG1Q</scope>
</reference>
<reference key="21">
    <citation type="journal article" date="2023" name="BMC Res. Notes">
        <title>Abnormal expression of lysosomal glycoproteins in patients with congenital disorders of glycosylation.</title>
        <authorList>
            <person name="Sabry S."/>
            <person name="Eissa N.R."/>
            <person name="Zaki M.S."/>
        </authorList>
    </citation>
    <scope>VARIANT CDG1Q LYS-143</scope>
</reference>
<reference key="22">
    <citation type="journal article" date="2024" name="Cell">
        <title>A pseudoautosomal glycosylation disorder prompts the revision of dolichol biosynthesis.</title>
        <authorList>
            <person name="Wilson M.P."/>
            <person name="Kentache T."/>
            <person name="Althoff C.R."/>
            <person name="Schulz C."/>
            <person name="de Bettignies G."/>
            <person name="Mateu Cabrera G."/>
            <person name="Cimbalistiene L."/>
            <person name="Burnyte B."/>
            <person name="Yoon G."/>
            <person name="Costain G."/>
            <person name="Vuillaumier-Barrot S."/>
            <person name="Cheillan D."/>
            <person name="Rymen D."/>
            <person name="Rychtarova L."/>
            <person name="Hansikova H."/>
            <person name="Bury M."/>
            <person name="Dewulf J.P."/>
            <person name="Caligiore F."/>
            <person name="Jaeken J."/>
            <person name="Cantagrel V."/>
            <person name="Van Schaftingen E."/>
            <person name="Matthijs G."/>
            <person name="Foulquier F."/>
            <person name="Bommer G.T."/>
        </authorList>
    </citation>
    <scope>FUNCTION</scope>
    <scope>CATALYTIC ACTIVITY</scope>
    <scope>PATHWAY</scope>
</reference>